<comment type="function">
    <text evidence="1">Produces ATP from ADP in the presence of a proton gradient across the membrane. The alpha chain is a regulatory subunit.</text>
</comment>
<comment type="catalytic activity">
    <reaction evidence="1">
        <text>ATP + H2O + 4 H(+)(in) = ADP + phosphate + 5 H(+)(out)</text>
        <dbReference type="Rhea" id="RHEA:57720"/>
        <dbReference type="ChEBI" id="CHEBI:15377"/>
        <dbReference type="ChEBI" id="CHEBI:15378"/>
        <dbReference type="ChEBI" id="CHEBI:30616"/>
        <dbReference type="ChEBI" id="CHEBI:43474"/>
        <dbReference type="ChEBI" id="CHEBI:456216"/>
        <dbReference type="EC" id="7.1.2.2"/>
    </reaction>
</comment>
<comment type="subunit">
    <text evidence="1">F-type ATPases have 2 components, CF(1) - the catalytic core - and CF(0) - the membrane proton channel. CF(1) has five subunits: alpha(3), beta(3), gamma(1), delta(1), epsilon(1). CF(0) has three main subunits: a(1), b(2) and c(9-12). The alpha and beta chains form an alternating ring which encloses part of the gamma chain. CF(1) is attached to CF(0) by a central stalk formed by the gamma and epsilon chains, while a peripheral stalk is formed by the delta and b chains.</text>
</comment>
<comment type="subcellular location">
    <subcellularLocation>
        <location evidence="1">Cell inner membrane</location>
        <topology evidence="1">Peripheral membrane protein</topology>
    </subcellularLocation>
</comment>
<comment type="similarity">
    <text evidence="1">Belongs to the ATPase alpha/beta chains family.</text>
</comment>
<sequence length="513" mass="55080">MQLNSTEISDLIKQRIEQFEVVSEARNEGTIVAVSDGIIRINGLADVMQGEMIELPGNRYAIALNLERDSVGAVVMGSYAGLAEGVKVKTTGRILEVPVGRGLLGRVLNTLGEPIDGKGPVDNDGYSPIEVIAPGVIERQSVDEPVQTGYKTVDSMIPIGRGQRELVIGDRQTGKTALAIDAIINQKESGIKCVYVAIGQKASTIANVVRKLEEHGALANTIVVVATASEAAALQYLAPYSGCSMGEYFRDRGEDALIVYDDLSKQAVAYRQISLLLKRPPGREAYPGDVFYLHSRLLERASRVNANYVEKFTKGAVTGKTGSLTALPIIETQAGDVSAFVPTNVISITDGQIFLETDLFNSGLRPAVNPGISVSRVGGAAQTKIIKKLSGGIRTALAQYRELAAFSQFASDLDDATRAQLEHGERVTELMKQKQYAPMSVAAQAVVIYAAEKGYLKSVALNKVGHFEAALLSFMNSEYAALMTNINATGDYNADIEGEIKAALDKFVATQTW</sequence>
<keyword id="KW-0066">ATP synthesis</keyword>
<keyword id="KW-0067">ATP-binding</keyword>
<keyword id="KW-0997">Cell inner membrane</keyword>
<keyword id="KW-1003">Cell membrane</keyword>
<keyword id="KW-0139">CF(1)</keyword>
<keyword id="KW-0375">Hydrogen ion transport</keyword>
<keyword id="KW-0406">Ion transport</keyword>
<keyword id="KW-0472">Membrane</keyword>
<keyword id="KW-0547">Nucleotide-binding</keyword>
<keyword id="KW-1185">Reference proteome</keyword>
<keyword id="KW-1278">Translocase</keyword>
<keyword id="KW-0813">Transport</keyword>
<organism>
    <name type="scientific">Shewanella denitrificans (strain OS217 / ATCC BAA-1090 / DSM 15013)</name>
    <dbReference type="NCBI Taxonomy" id="318161"/>
    <lineage>
        <taxon>Bacteria</taxon>
        <taxon>Pseudomonadati</taxon>
        <taxon>Pseudomonadota</taxon>
        <taxon>Gammaproteobacteria</taxon>
        <taxon>Alteromonadales</taxon>
        <taxon>Shewanellaceae</taxon>
        <taxon>Shewanella</taxon>
    </lineage>
</organism>
<name>ATPA_SHEDO</name>
<evidence type="ECO:0000255" key="1">
    <source>
        <dbReference type="HAMAP-Rule" id="MF_01346"/>
    </source>
</evidence>
<accession>Q12HP9</accession>
<gene>
    <name evidence="1" type="primary">atpA</name>
    <name type="ordered locus">Sden_3754</name>
</gene>
<protein>
    <recommendedName>
        <fullName evidence="1">ATP synthase subunit alpha</fullName>
        <ecNumber evidence="1">7.1.2.2</ecNumber>
    </recommendedName>
    <alternativeName>
        <fullName evidence="1">ATP synthase F1 sector subunit alpha</fullName>
    </alternativeName>
    <alternativeName>
        <fullName evidence="1">F-ATPase subunit alpha</fullName>
    </alternativeName>
</protein>
<feature type="chain" id="PRO_0000302698" description="ATP synthase subunit alpha">
    <location>
        <begin position="1"/>
        <end position="513"/>
    </location>
</feature>
<feature type="binding site" evidence="1">
    <location>
        <begin position="169"/>
        <end position="176"/>
    </location>
    <ligand>
        <name>ATP</name>
        <dbReference type="ChEBI" id="CHEBI:30616"/>
    </ligand>
</feature>
<feature type="site" description="Required for activity" evidence="1">
    <location>
        <position position="373"/>
    </location>
</feature>
<dbReference type="EC" id="7.1.2.2" evidence="1"/>
<dbReference type="EMBL" id="CP000302">
    <property type="protein sequence ID" value="ABE57027.1"/>
    <property type="molecule type" value="Genomic_DNA"/>
</dbReference>
<dbReference type="RefSeq" id="WP_011498165.1">
    <property type="nucleotide sequence ID" value="NC_007954.1"/>
</dbReference>
<dbReference type="SMR" id="Q12HP9"/>
<dbReference type="STRING" id="318161.Sden_3754"/>
<dbReference type="KEGG" id="sdn:Sden_3754"/>
<dbReference type="eggNOG" id="COG0056">
    <property type="taxonomic scope" value="Bacteria"/>
</dbReference>
<dbReference type="HOGENOM" id="CLU_010091_2_1_6"/>
<dbReference type="OrthoDB" id="9803053at2"/>
<dbReference type="Proteomes" id="UP000001982">
    <property type="component" value="Chromosome"/>
</dbReference>
<dbReference type="GO" id="GO:0005886">
    <property type="term" value="C:plasma membrane"/>
    <property type="evidence" value="ECO:0007669"/>
    <property type="project" value="UniProtKB-SubCell"/>
</dbReference>
<dbReference type="GO" id="GO:0045259">
    <property type="term" value="C:proton-transporting ATP synthase complex"/>
    <property type="evidence" value="ECO:0007669"/>
    <property type="project" value="UniProtKB-KW"/>
</dbReference>
<dbReference type="GO" id="GO:0043531">
    <property type="term" value="F:ADP binding"/>
    <property type="evidence" value="ECO:0007669"/>
    <property type="project" value="TreeGrafter"/>
</dbReference>
<dbReference type="GO" id="GO:0005524">
    <property type="term" value="F:ATP binding"/>
    <property type="evidence" value="ECO:0007669"/>
    <property type="project" value="UniProtKB-UniRule"/>
</dbReference>
<dbReference type="GO" id="GO:0046933">
    <property type="term" value="F:proton-transporting ATP synthase activity, rotational mechanism"/>
    <property type="evidence" value="ECO:0007669"/>
    <property type="project" value="UniProtKB-UniRule"/>
</dbReference>
<dbReference type="CDD" id="cd18113">
    <property type="entry name" value="ATP-synt_F1_alpha_C"/>
    <property type="match status" value="1"/>
</dbReference>
<dbReference type="CDD" id="cd18116">
    <property type="entry name" value="ATP-synt_F1_alpha_N"/>
    <property type="match status" value="1"/>
</dbReference>
<dbReference type="CDD" id="cd01132">
    <property type="entry name" value="F1-ATPase_alpha_CD"/>
    <property type="match status" value="1"/>
</dbReference>
<dbReference type="FunFam" id="1.20.150.20:FF:000001">
    <property type="entry name" value="ATP synthase subunit alpha"/>
    <property type="match status" value="1"/>
</dbReference>
<dbReference type="FunFam" id="2.40.30.20:FF:000001">
    <property type="entry name" value="ATP synthase subunit alpha"/>
    <property type="match status" value="1"/>
</dbReference>
<dbReference type="FunFam" id="3.40.50.300:FF:000002">
    <property type="entry name" value="ATP synthase subunit alpha"/>
    <property type="match status" value="1"/>
</dbReference>
<dbReference type="Gene3D" id="2.40.30.20">
    <property type="match status" value="1"/>
</dbReference>
<dbReference type="Gene3D" id="1.20.150.20">
    <property type="entry name" value="ATP synthase alpha/beta chain, C-terminal domain"/>
    <property type="match status" value="1"/>
</dbReference>
<dbReference type="Gene3D" id="3.40.50.300">
    <property type="entry name" value="P-loop containing nucleotide triphosphate hydrolases"/>
    <property type="match status" value="1"/>
</dbReference>
<dbReference type="HAMAP" id="MF_01346">
    <property type="entry name" value="ATP_synth_alpha_bact"/>
    <property type="match status" value="1"/>
</dbReference>
<dbReference type="InterPro" id="IPR023366">
    <property type="entry name" value="ATP_synth_asu-like_sf"/>
</dbReference>
<dbReference type="InterPro" id="IPR000793">
    <property type="entry name" value="ATP_synth_asu_C"/>
</dbReference>
<dbReference type="InterPro" id="IPR038376">
    <property type="entry name" value="ATP_synth_asu_C_sf"/>
</dbReference>
<dbReference type="InterPro" id="IPR033732">
    <property type="entry name" value="ATP_synth_F1_a_nt-bd_dom"/>
</dbReference>
<dbReference type="InterPro" id="IPR005294">
    <property type="entry name" value="ATP_synth_F1_asu"/>
</dbReference>
<dbReference type="InterPro" id="IPR020003">
    <property type="entry name" value="ATPase_a/bsu_AS"/>
</dbReference>
<dbReference type="InterPro" id="IPR004100">
    <property type="entry name" value="ATPase_F1/V1/A1_a/bsu_N"/>
</dbReference>
<dbReference type="InterPro" id="IPR036121">
    <property type="entry name" value="ATPase_F1/V1/A1_a/bsu_N_sf"/>
</dbReference>
<dbReference type="InterPro" id="IPR000194">
    <property type="entry name" value="ATPase_F1/V1/A1_a/bsu_nucl-bd"/>
</dbReference>
<dbReference type="InterPro" id="IPR027417">
    <property type="entry name" value="P-loop_NTPase"/>
</dbReference>
<dbReference type="NCBIfam" id="TIGR00962">
    <property type="entry name" value="atpA"/>
    <property type="match status" value="1"/>
</dbReference>
<dbReference type="NCBIfam" id="NF009884">
    <property type="entry name" value="PRK13343.1"/>
    <property type="match status" value="1"/>
</dbReference>
<dbReference type="PANTHER" id="PTHR48082">
    <property type="entry name" value="ATP SYNTHASE SUBUNIT ALPHA, MITOCHONDRIAL"/>
    <property type="match status" value="1"/>
</dbReference>
<dbReference type="PANTHER" id="PTHR48082:SF2">
    <property type="entry name" value="ATP SYNTHASE SUBUNIT ALPHA, MITOCHONDRIAL"/>
    <property type="match status" value="1"/>
</dbReference>
<dbReference type="Pfam" id="PF00006">
    <property type="entry name" value="ATP-synt_ab"/>
    <property type="match status" value="1"/>
</dbReference>
<dbReference type="Pfam" id="PF00306">
    <property type="entry name" value="ATP-synt_ab_C"/>
    <property type="match status" value="1"/>
</dbReference>
<dbReference type="Pfam" id="PF02874">
    <property type="entry name" value="ATP-synt_ab_N"/>
    <property type="match status" value="1"/>
</dbReference>
<dbReference type="SUPFAM" id="SSF47917">
    <property type="entry name" value="C-terminal domain of alpha and beta subunits of F1 ATP synthase"/>
    <property type="match status" value="1"/>
</dbReference>
<dbReference type="SUPFAM" id="SSF50615">
    <property type="entry name" value="N-terminal domain of alpha and beta subunits of F1 ATP synthase"/>
    <property type="match status" value="1"/>
</dbReference>
<dbReference type="SUPFAM" id="SSF52540">
    <property type="entry name" value="P-loop containing nucleoside triphosphate hydrolases"/>
    <property type="match status" value="1"/>
</dbReference>
<dbReference type="PROSITE" id="PS00152">
    <property type="entry name" value="ATPASE_ALPHA_BETA"/>
    <property type="match status" value="1"/>
</dbReference>
<proteinExistence type="inferred from homology"/>
<reference key="1">
    <citation type="submission" date="2006-03" db="EMBL/GenBank/DDBJ databases">
        <title>Complete sequence of Shewanella denitrificans OS217.</title>
        <authorList>
            <consortium name="US DOE Joint Genome Institute"/>
            <person name="Copeland A."/>
            <person name="Lucas S."/>
            <person name="Lapidus A."/>
            <person name="Barry K."/>
            <person name="Detter J.C."/>
            <person name="Glavina del Rio T."/>
            <person name="Hammon N."/>
            <person name="Israni S."/>
            <person name="Dalin E."/>
            <person name="Tice H."/>
            <person name="Pitluck S."/>
            <person name="Brettin T."/>
            <person name="Bruce D."/>
            <person name="Han C."/>
            <person name="Tapia R."/>
            <person name="Gilna P."/>
            <person name="Kiss H."/>
            <person name="Schmutz J."/>
            <person name="Larimer F."/>
            <person name="Land M."/>
            <person name="Hauser L."/>
            <person name="Kyrpides N."/>
            <person name="Lykidis A."/>
            <person name="Richardson P."/>
        </authorList>
    </citation>
    <scope>NUCLEOTIDE SEQUENCE [LARGE SCALE GENOMIC DNA]</scope>
    <source>
        <strain>OS217 / ATCC BAA-1090 / DSM 15013</strain>
    </source>
</reference>